<sequence>MFKVIHRYVGPASLSLLTFKVYASSKKDSPHKDTVKVNELSLYSVPEHQSKYVEEPRTQLEESISHLRHYCEPYTSWCQEKYSQNKPKIQSLVQWGLDSYEYLQNAPPGFFPRLGVIGFAGVVGLVLARGSKIKKLVYPPGFMGFAASLYYPQQAIVFVQVSGEKLYDWGLRGYIVVEDLWKENFQKSGNVKNSPGNK</sequence>
<evidence type="ECO:0000250" key="1"/>
<evidence type="ECO:0000250" key="2">
    <source>
        <dbReference type="UniProtKB" id="Q9BUR5"/>
    </source>
</evidence>
<evidence type="ECO:0000255" key="3"/>
<evidence type="ECO:0000305" key="4"/>
<organism>
    <name type="scientific">Bos taurus</name>
    <name type="common">Bovine</name>
    <dbReference type="NCBI Taxonomy" id="9913"/>
    <lineage>
        <taxon>Eukaryota</taxon>
        <taxon>Metazoa</taxon>
        <taxon>Chordata</taxon>
        <taxon>Craniata</taxon>
        <taxon>Vertebrata</taxon>
        <taxon>Euteleostomi</taxon>
        <taxon>Mammalia</taxon>
        <taxon>Eutheria</taxon>
        <taxon>Laurasiatheria</taxon>
        <taxon>Artiodactyla</taxon>
        <taxon>Ruminantia</taxon>
        <taxon>Pecora</taxon>
        <taxon>Bovidae</taxon>
        <taxon>Bovinae</taxon>
        <taxon>Bos</taxon>
    </lineage>
</organism>
<gene>
    <name type="primary">APOO</name>
    <name type="synonym">FAM121B</name>
    <name type="synonym">MIC23</name>
    <name type="synonym">MIC26</name>
</gene>
<keyword id="KW-0256">Endoplasmic reticulum</keyword>
<keyword id="KW-0325">Glycoprotein</keyword>
<keyword id="KW-0333">Golgi apparatus</keyword>
<keyword id="KW-0345">HDL</keyword>
<keyword id="KW-0427">LDL</keyword>
<keyword id="KW-0445">Lipid transport</keyword>
<keyword id="KW-0472">Membrane</keyword>
<keyword id="KW-0496">Mitochondrion</keyword>
<keyword id="KW-0999">Mitochondrion inner membrane</keyword>
<keyword id="KW-0654">Proteoglycan</keyword>
<keyword id="KW-1185">Reference proteome</keyword>
<keyword id="KW-0964">Secreted</keyword>
<keyword id="KW-0732">Signal</keyword>
<keyword id="KW-0812">Transmembrane</keyword>
<keyword id="KW-1133">Transmembrane helix</keyword>
<keyword id="KW-0813">Transport</keyword>
<keyword id="KW-0850">VLDL</keyword>
<protein>
    <recommendedName>
        <fullName>MICOS complex subunit MIC26</fullName>
    </recommendedName>
    <alternativeName>
        <fullName>Apolipoprotein O</fullName>
    </alternativeName>
    <alternativeName>
        <fullName>MICOS complex subunit MIC23</fullName>
    </alternativeName>
    <alternativeName>
        <fullName>Protein FAM121B</fullName>
    </alternativeName>
</protein>
<dbReference type="EMBL" id="BC118339">
    <property type="protein sequence ID" value="AAI18340.1"/>
    <property type="molecule type" value="mRNA"/>
</dbReference>
<dbReference type="RefSeq" id="NP_001069107.1">
    <property type="nucleotide sequence ID" value="NM_001075639.1"/>
</dbReference>
<dbReference type="FunCoup" id="Q148H0">
    <property type="interactions" value="838"/>
</dbReference>
<dbReference type="STRING" id="9913.ENSBTAP00000060951"/>
<dbReference type="GlyCosmos" id="Q148H0">
    <property type="glycosylation" value="1 site, No reported glycans"/>
</dbReference>
<dbReference type="GlyGen" id="Q148H0">
    <property type="glycosylation" value="1 site"/>
</dbReference>
<dbReference type="PaxDb" id="9913-ENSBTAP00000014525"/>
<dbReference type="GeneID" id="513847"/>
<dbReference type="KEGG" id="bta:513847"/>
<dbReference type="CTD" id="79135"/>
<dbReference type="VEuPathDB" id="HostDB:ENSBTAG00000010937"/>
<dbReference type="eggNOG" id="KOG4798">
    <property type="taxonomic scope" value="Eukaryota"/>
</dbReference>
<dbReference type="InParanoid" id="Q148H0"/>
<dbReference type="OrthoDB" id="9421762at2759"/>
<dbReference type="Proteomes" id="UP000009136">
    <property type="component" value="Chromosome X"/>
</dbReference>
<dbReference type="Bgee" id="ENSBTAG00000010937">
    <property type="expression patterns" value="Expressed in oocyte and 103 other cell types or tissues"/>
</dbReference>
<dbReference type="GO" id="GO:0005789">
    <property type="term" value="C:endoplasmic reticulum membrane"/>
    <property type="evidence" value="ECO:0000250"/>
    <property type="project" value="UniProtKB"/>
</dbReference>
<dbReference type="GO" id="GO:0005576">
    <property type="term" value="C:extracellular region"/>
    <property type="evidence" value="ECO:0000250"/>
    <property type="project" value="UniProtKB"/>
</dbReference>
<dbReference type="GO" id="GO:0000139">
    <property type="term" value="C:Golgi membrane"/>
    <property type="evidence" value="ECO:0000250"/>
    <property type="project" value="UniProtKB"/>
</dbReference>
<dbReference type="GO" id="GO:0034364">
    <property type="term" value="C:high-density lipoprotein particle"/>
    <property type="evidence" value="ECO:0007669"/>
    <property type="project" value="UniProtKB-KW"/>
</dbReference>
<dbReference type="GO" id="GO:0034362">
    <property type="term" value="C:low-density lipoprotein particle"/>
    <property type="evidence" value="ECO:0007669"/>
    <property type="project" value="UniProtKB-KW"/>
</dbReference>
<dbReference type="GO" id="GO:0061617">
    <property type="term" value="C:MICOS complex"/>
    <property type="evidence" value="ECO:0000250"/>
    <property type="project" value="UniProtKB"/>
</dbReference>
<dbReference type="GO" id="GO:0005743">
    <property type="term" value="C:mitochondrial inner membrane"/>
    <property type="evidence" value="ECO:0000250"/>
    <property type="project" value="UniProtKB"/>
</dbReference>
<dbReference type="GO" id="GO:0034361">
    <property type="term" value="C:very-low-density lipoprotein particle"/>
    <property type="evidence" value="ECO:0007669"/>
    <property type="project" value="UniProtKB-KW"/>
</dbReference>
<dbReference type="GO" id="GO:0042407">
    <property type="term" value="P:cristae formation"/>
    <property type="evidence" value="ECO:0000250"/>
    <property type="project" value="UniProtKB"/>
</dbReference>
<dbReference type="GO" id="GO:0006869">
    <property type="term" value="P:lipid transport"/>
    <property type="evidence" value="ECO:0007669"/>
    <property type="project" value="UniProtKB-KW"/>
</dbReference>
<dbReference type="InterPro" id="IPR019166">
    <property type="entry name" value="MIC26/MIC27"/>
</dbReference>
<dbReference type="InterPro" id="IPR033182">
    <property type="entry name" value="MIC26/MIC27_animal"/>
</dbReference>
<dbReference type="PANTHER" id="PTHR14564">
    <property type="entry name" value="MICOS COMPLEX SUBUNIT MIC26 / MIC27 FAMILY MEMBER"/>
    <property type="match status" value="1"/>
</dbReference>
<dbReference type="Pfam" id="PF09769">
    <property type="entry name" value="ApoO"/>
    <property type="match status" value="1"/>
</dbReference>
<name>MIC26_BOVIN</name>
<reference key="1">
    <citation type="submission" date="2006-06" db="EMBL/GenBank/DDBJ databases">
        <authorList>
            <consortium name="NIH - Mammalian Gene Collection (MGC) project"/>
        </authorList>
    </citation>
    <scope>NUCLEOTIDE SEQUENCE [LARGE SCALE MRNA]</scope>
    <source>
        <strain>Hereford</strain>
        <tissue>Thymus</tissue>
    </source>
</reference>
<feature type="signal peptide" evidence="3">
    <location>
        <begin position="1"/>
        <end position="25"/>
    </location>
</feature>
<feature type="chain" id="PRO_0000254645" description="MICOS complex subunit MIC26">
    <location>
        <begin position="26"/>
        <end position="198"/>
    </location>
</feature>
<feature type="transmembrane region" description="Helical" evidence="3">
    <location>
        <begin position="108"/>
        <end position="128"/>
    </location>
</feature>
<feature type="glycosylation site" description="O-linked (Xyl...) (chondroitin sulfate) serine" evidence="1">
    <location>
        <position position="162"/>
    </location>
</feature>
<comment type="function">
    <text evidence="2">Component of the MICOS complex, a large protein complex of the mitochondrial inner membrane that plays crucial roles in the maintenance of crista junctions, inner membrane architecture, and formation of contact sites to the outer membrane. Plays a crucial role in crista junction formation and mitochondrial function. Can induce cardiac lipotoxicity by enhancing mitochondrial respiration and fatty acid metabolism in cardiac myoblasts. Promotes cholesterol efflux from macrophage cells. Detected in HDL, LDL and VLDL. Secreted by a microsomal triglyceride transfer protein (MTTP)-dependent mechanism, probably as a VLDL-associated protein that is subsequently transferred to HDL.</text>
</comment>
<comment type="subunit">
    <text evidence="2">Component of the mitochondrial contact site and cristae organizing system (MICOS) complex, composed of at least MICOS10/MIC10, CHCHD3/MIC19, CHCHD6/MIC25, APOOL/MIC27, IMMT/MIC60, APOO/MIC23/MIC26 and MICOS13/MIC13. This complex was also known under the names MINOS or MitOS complex. The MICOS complex associates with mitochondrial outer membrane proteins SAMM50, MTX1 and MTX2 (together described as components of the mitochondrial outer membrane sorting assembly machinery (SAM) complex) and DNAJC11, mitochondrial inner membrane protein TMEM11 and with HSPA9. The MICOS and SAM complexes together with DNAJC11 are part of a large protein complex spanning both membranes termed the mitochondrial intermembrane space bridging (MIB) complex. Interacts with IMMT/MIC60. Interacts with MICOS10/MIC10 and APOOL/MIC27.</text>
</comment>
<comment type="subcellular location">
    <subcellularLocation>
        <location evidence="2">Mitochondrion inner membrane</location>
        <topology evidence="3">Single-pass membrane protein</topology>
    </subcellularLocation>
    <subcellularLocation>
        <location evidence="2">Secreted</location>
    </subcellularLocation>
    <subcellularLocation>
        <location evidence="2">Mitochondrion</location>
    </subcellularLocation>
    <subcellularLocation>
        <location evidence="2">Endoplasmic reticulum membrane</location>
    </subcellularLocation>
    <subcellularLocation>
        <location evidence="2">Golgi apparatus membrane</location>
    </subcellularLocation>
    <text evidence="2">Exists in three distinct forms: a glycosylated and secreted form, an ER/Golgi-resident form and a non-glycosylated mitochondrial form.</text>
</comment>
<comment type="PTM">
    <text evidence="2">O-glycosylation; glycosaminoglycan of chondroitin-sulfate type.</text>
</comment>
<comment type="similarity">
    <text evidence="4">Belongs to the apolipoprotein O/MICOS complex subunit Mic27 family.</text>
</comment>
<accession>Q148H0</accession>
<proteinExistence type="evidence at transcript level"/>